<reference key="1">
    <citation type="journal article" date="1997" name="Plant J.">
        <title>Molecular cloning of a new receptor-like kinase gene encoded at the Lr10 disease resistance locus of wheat.</title>
        <authorList>
            <person name="Feuillet C."/>
            <person name="Schachermayr G."/>
            <person name="Keller B."/>
        </authorList>
    </citation>
    <scope>NUCLEOTIDE SEQUENCE [GENOMIC DNA]</scope>
    <source>
        <strain>cv. Thatcher</strain>
        <tissue>Leaf</tissue>
    </source>
</reference>
<reference key="2">
    <citation type="journal article" date="1998" name="Plant Mol. Biol.">
        <title>Molecular characterization of a new type of receptor-like kinase (wlrk) gene family in wheat.</title>
        <authorList>
            <person name="Feuillet C."/>
            <person name="Reuzeau C."/>
            <person name="Kjellbom P."/>
            <person name="Keller B."/>
        </authorList>
    </citation>
    <scope>TISSUE SPECIFICITY</scope>
    <scope>SUBCELLULAR LOCATION</scope>
</reference>
<evidence type="ECO:0000255" key="1"/>
<evidence type="ECO:0000255" key="2">
    <source>
        <dbReference type="PROSITE-ProRule" id="PRU00159"/>
    </source>
</evidence>
<evidence type="ECO:0000255" key="3">
    <source>
        <dbReference type="PROSITE-ProRule" id="PRU00498"/>
    </source>
</evidence>
<evidence type="ECO:0000269" key="4">
    <source>
    </source>
</evidence>
<evidence type="ECO:0000305" key="5"/>
<evidence type="ECO:0000312" key="6">
    <source>
        <dbReference type="EMBL" id="AAC49629.1"/>
    </source>
</evidence>
<gene>
    <name evidence="6" type="primary">LRK10</name>
</gene>
<protein>
    <recommendedName>
        <fullName evidence="6">Rust resistance kinase Lr10</fullName>
        <ecNumber>2.7.11.1</ecNumber>
    </recommendedName>
    <alternativeName>
        <fullName>Probable receptor-like serine/threonine-protein kinase LRK10</fullName>
    </alternativeName>
</protein>
<keyword id="KW-0067">ATP-binding</keyword>
<keyword id="KW-1003">Cell membrane</keyword>
<keyword id="KW-0325">Glycoprotein</keyword>
<keyword id="KW-0418">Kinase</keyword>
<keyword id="KW-0472">Membrane</keyword>
<keyword id="KW-0547">Nucleotide-binding</keyword>
<keyword id="KW-0675">Receptor</keyword>
<keyword id="KW-1185">Reference proteome</keyword>
<keyword id="KW-0723">Serine/threonine-protein kinase</keyword>
<keyword id="KW-0732">Signal</keyword>
<keyword id="KW-0808">Transferase</keyword>
<keyword id="KW-0812">Transmembrane</keyword>
<keyword id="KW-1133">Transmembrane helix</keyword>
<accession>P93604</accession>
<dbReference type="EC" id="2.7.11.1"/>
<dbReference type="EMBL" id="U51330">
    <property type="protein sequence ID" value="AAC49629.1"/>
    <property type="molecule type" value="Genomic_DNA"/>
</dbReference>
<dbReference type="PIR" id="T06793">
    <property type="entry name" value="T06793"/>
</dbReference>
<dbReference type="SMR" id="P93604"/>
<dbReference type="STRING" id="4565.P93604"/>
<dbReference type="GlyCosmos" id="P93604">
    <property type="glycosylation" value="3 sites, No reported glycans"/>
</dbReference>
<dbReference type="PaxDb" id="4565-Traes_1AS_3A3C86D64.1"/>
<dbReference type="eggNOG" id="KOG1187">
    <property type="taxonomic scope" value="Eukaryota"/>
</dbReference>
<dbReference type="Proteomes" id="UP000019116">
    <property type="component" value="Unplaced"/>
</dbReference>
<dbReference type="ExpressionAtlas" id="P93604">
    <property type="expression patterns" value="baseline"/>
</dbReference>
<dbReference type="GO" id="GO:0005886">
    <property type="term" value="C:plasma membrane"/>
    <property type="evidence" value="ECO:0000314"/>
    <property type="project" value="UniProtKB"/>
</dbReference>
<dbReference type="GO" id="GO:0005524">
    <property type="term" value="F:ATP binding"/>
    <property type="evidence" value="ECO:0007669"/>
    <property type="project" value="UniProtKB-KW"/>
</dbReference>
<dbReference type="GO" id="GO:0106310">
    <property type="term" value="F:protein serine kinase activity"/>
    <property type="evidence" value="ECO:0007669"/>
    <property type="project" value="RHEA"/>
</dbReference>
<dbReference type="GO" id="GO:0004674">
    <property type="term" value="F:protein serine/threonine kinase activity"/>
    <property type="evidence" value="ECO:0007669"/>
    <property type="project" value="UniProtKB-KW"/>
</dbReference>
<dbReference type="FunFam" id="1.10.510.10:FF:000590">
    <property type="entry name" value="PR5-like receptor kinase"/>
    <property type="match status" value="1"/>
</dbReference>
<dbReference type="FunFam" id="3.30.200.20:FF:000296">
    <property type="entry name" value="Receptor-like kinase LRK10"/>
    <property type="match status" value="1"/>
</dbReference>
<dbReference type="Gene3D" id="3.30.200.20">
    <property type="entry name" value="Phosphorylase Kinase, domain 1"/>
    <property type="match status" value="1"/>
</dbReference>
<dbReference type="Gene3D" id="1.10.510.10">
    <property type="entry name" value="Transferase(Phosphotransferase) domain 1"/>
    <property type="match status" value="1"/>
</dbReference>
<dbReference type="InterPro" id="IPR011009">
    <property type="entry name" value="Kinase-like_dom_sf"/>
</dbReference>
<dbReference type="InterPro" id="IPR045874">
    <property type="entry name" value="LRK10/LRL21-25-like"/>
</dbReference>
<dbReference type="InterPro" id="IPR000719">
    <property type="entry name" value="Prot_kinase_dom"/>
</dbReference>
<dbReference type="InterPro" id="IPR017441">
    <property type="entry name" value="Protein_kinase_ATP_BS"/>
</dbReference>
<dbReference type="InterPro" id="IPR001245">
    <property type="entry name" value="Ser-Thr/Tyr_kinase_cat_dom"/>
</dbReference>
<dbReference type="InterPro" id="IPR008271">
    <property type="entry name" value="Ser/Thr_kinase_AS"/>
</dbReference>
<dbReference type="PANTHER" id="PTHR27009">
    <property type="entry name" value="RUST RESISTANCE KINASE LR10-RELATED"/>
    <property type="match status" value="1"/>
</dbReference>
<dbReference type="Pfam" id="PF07714">
    <property type="entry name" value="PK_Tyr_Ser-Thr"/>
    <property type="match status" value="1"/>
</dbReference>
<dbReference type="SMART" id="SM00220">
    <property type="entry name" value="S_TKc"/>
    <property type="match status" value="1"/>
</dbReference>
<dbReference type="SUPFAM" id="SSF56112">
    <property type="entry name" value="Protein kinase-like (PK-like)"/>
    <property type="match status" value="1"/>
</dbReference>
<dbReference type="PROSITE" id="PS00107">
    <property type="entry name" value="PROTEIN_KINASE_ATP"/>
    <property type="match status" value="1"/>
</dbReference>
<dbReference type="PROSITE" id="PS50011">
    <property type="entry name" value="PROTEIN_KINASE_DOM"/>
    <property type="match status" value="1"/>
</dbReference>
<dbReference type="PROSITE" id="PS00108">
    <property type="entry name" value="PROTEIN_KINASE_ST"/>
    <property type="match status" value="1"/>
</dbReference>
<proteinExistence type="evidence at transcript level"/>
<name>LRK10_WHEAT</name>
<sequence>MSKLLVIALLLLPLINHGIYLATAWDDQDFFKYCPPSKCSQHGPMIRYPLCLESSNTSSSSSCGCAGRSIWKLACSGQDTILVHPVLGPYSVSAIDYRRSSMKITPLVDPCLVLQQKLIISRSSSSPQVDVINDEKPSFDENFFESSSATIVHCSREFTPAAAHADSIAGPVSCLSNTTHFFYLVNSDEDMSILPLDCKVVPVSDRGGISLPHMLKDQMFYNFTETAKKIPSFAETAVSWDEGDCRECELSGRRCAFSSQRDREFCMPDPHGSHIKVIAATSSVAAFVALLLTVATVLYLSLKTRYNAEIHMKVEMFLKTYGTSKPTRYTFSEVKKMARRFKEKVGQGGFGSVYKGELPNGVPVAVKMLENSTGEGESFINEVATIGLIHHANIVRLLGFCSEGMRRALIYEFMPNESLEKYIFSDDSNIFQNLLVPEKLLDIALGIARGMEYLHQGCNQRILHFDIKPHNILLDYNFNPKISDFGLAKLCARDQSIVTLTAARGTMGYIAPELYSRNFGGVSYKADVYSFGMLVLEMVSGRRNSDPRIGSQDDVYLPEWIYEKVINGEELALTLETTQEEKDKVRQLAMVALWCIQWNPRNRPSMTKVVNMLTGRLQSLQMPPKPFVSSENELMS</sequence>
<organism>
    <name type="scientific">Triticum aestivum</name>
    <name type="common">Wheat</name>
    <dbReference type="NCBI Taxonomy" id="4565"/>
    <lineage>
        <taxon>Eukaryota</taxon>
        <taxon>Viridiplantae</taxon>
        <taxon>Streptophyta</taxon>
        <taxon>Embryophyta</taxon>
        <taxon>Tracheophyta</taxon>
        <taxon>Spermatophyta</taxon>
        <taxon>Magnoliopsida</taxon>
        <taxon>Liliopsida</taxon>
        <taxon>Poales</taxon>
        <taxon>Poaceae</taxon>
        <taxon>BOP clade</taxon>
        <taxon>Pooideae</taxon>
        <taxon>Triticodae</taxon>
        <taxon>Triticeae</taxon>
        <taxon>Triticinae</taxon>
        <taxon>Triticum</taxon>
    </lineage>
</organism>
<feature type="signal peptide" evidence="1">
    <location>
        <begin position="1"/>
        <end position="24"/>
    </location>
</feature>
<feature type="chain" id="PRO_5004161889" description="Rust resistance kinase Lr10">
    <location>
        <begin position="25"/>
        <end position="636"/>
    </location>
</feature>
<feature type="topological domain" description="Extracellular" evidence="5">
    <location>
        <begin position="25"/>
        <end position="276"/>
    </location>
</feature>
<feature type="transmembrane region" description="Helical" evidence="1">
    <location>
        <begin position="277"/>
        <end position="297"/>
    </location>
</feature>
<feature type="topological domain" description="Cytoplasmic" evidence="5">
    <location>
        <begin position="298"/>
        <end position="636"/>
    </location>
</feature>
<feature type="domain" description="Protein kinase" evidence="2">
    <location>
        <begin position="339"/>
        <end position="628"/>
    </location>
</feature>
<feature type="active site" description="Proton acceptor" evidence="2">
    <location>
        <position position="466"/>
    </location>
</feature>
<feature type="binding site" evidence="2">
    <location>
        <begin position="345"/>
        <end position="353"/>
    </location>
    <ligand>
        <name>ATP</name>
        <dbReference type="ChEBI" id="CHEBI:30616"/>
    </ligand>
</feature>
<feature type="binding site" evidence="2">
    <location>
        <position position="367"/>
    </location>
    <ligand>
        <name>ATP</name>
        <dbReference type="ChEBI" id="CHEBI:30616"/>
    </ligand>
</feature>
<feature type="glycosylation site" description="N-linked (GlcNAc...) asparagine" evidence="3">
    <location>
        <position position="56"/>
    </location>
</feature>
<feature type="glycosylation site" description="N-linked (GlcNAc...) asparagine" evidence="3">
    <location>
        <position position="177"/>
    </location>
</feature>
<feature type="glycosylation site" description="N-linked (GlcNAc...) asparagine" evidence="3">
    <location>
        <position position="222"/>
    </location>
</feature>
<comment type="catalytic activity">
    <reaction>
        <text>L-seryl-[protein] + ATP = O-phospho-L-seryl-[protein] + ADP + H(+)</text>
        <dbReference type="Rhea" id="RHEA:17989"/>
        <dbReference type="Rhea" id="RHEA-COMP:9863"/>
        <dbReference type="Rhea" id="RHEA-COMP:11604"/>
        <dbReference type="ChEBI" id="CHEBI:15378"/>
        <dbReference type="ChEBI" id="CHEBI:29999"/>
        <dbReference type="ChEBI" id="CHEBI:30616"/>
        <dbReference type="ChEBI" id="CHEBI:83421"/>
        <dbReference type="ChEBI" id="CHEBI:456216"/>
        <dbReference type="EC" id="2.7.11.1"/>
    </reaction>
</comment>
<comment type="catalytic activity">
    <reaction>
        <text>L-threonyl-[protein] + ATP = O-phospho-L-threonyl-[protein] + ADP + H(+)</text>
        <dbReference type="Rhea" id="RHEA:46608"/>
        <dbReference type="Rhea" id="RHEA-COMP:11060"/>
        <dbReference type="Rhea" id="RHEA-COMP:11605"/>
        <dbReference type="ChEBI" id="CHEBI:15378"/>
        <dbReference type="ChEBI" id="CHEBI:30013"/>
        <dbReference type="ChEBI" id="CHEBI:30616"/>
        <dbReference type="ChEBI" id="CHEBI:61977"/>
        <dbReference type="ChEBI" id="CHEBI:456216"/>
        <dbReference type="EC" id="2.7.11.1"/>
    </reaction>
</comment>
<comment type="subcellular location">
    <subcellularLocation>
        <location evidence="4">Cell membrane</location>
        <topology evidence="5">Single-pass type I membrane protein</topology>
    </subcellularLocation>
</comment>
<comment type="tissue specificity">
    <text evidence="4">Specifically expressed in the aerial parts of the plant.</text>
</comment>
<comment type="similarity">
    <text evidence="2">Belongs to the protein kinase superfamily. Ser/Thr protein kinase family.</text>
</comment>